<dbReference type="EMBL" id="AAEY01000024">
    <property type="protein sequence ID" value="EAL20776.1"/>
    <property type="molecule type" value="Genomic_DNA"/>
</dbReference>
<dbReference type="RefSeq" id="XP_775423.1">
    <property type="nucleotide sequence ID" value="XM_770330.1"/>
</dbReference>
<dbReference type="SMR" id="P0CM67"/>
<dbReference type="EnsemblFungi" id="AAW43439">
    <property type="protein sequence ID" value="AAW43439"/>
    <property type="gene ID" value="CNE01440"/>
</dbReference>
<dbReference type="GeneID" id="4936147"/>
<dbReference type="KEGG" id="cnb:CNBE1390"/>
<dbReference type="VEuPathDB" id="FungiDB:CNBE1390"/>
<dbReference type="HOGENOM" id="CLU_125051_1_0_1"/>
<dbReference type="OrthoDB" id="9320at5206"/>
<dbReference type="GO" id="GO:0005730">
    <property type="term" value="C:nucleolus"/>
    <property type="evidence" value="ECO:0007669"/>
    <property type="project" value="UniProtKB-SubCell"/>
</dbReference>
<dbReference type="GO" id="GO:0006364">
    <property type="term" value="P:rRNA processing"/>
    <property type="evidence" value="ECO:0007669"/>
    <property type="project" value="UniProtKB-KW"/>
</dbReference>
<dbReference type="InterPro" id="IPR005579">
    <property type="entry name" value="Cgr1-like"/>
</dbReference>
<dbReference type="Pfam" id="PF03879">
    <property type="entry name" value="Cgr1"/>
    <property type="match status" value="1"/>
</dbReference>
<name>CGR1_CRYNB</name>
<evidence type="ECO:0000250" key="1"/>
<evidence type="ECO:0000255" key="2"/>
<evidence type="ECO:0000256" key="3">
    <source>
        <dbReference type="SAM" id="MobiDB-lite"/>
    </source>
</evidence>
<evidence type="ECO:0000305" key="4"/>
<accession>P0CM67</accession>
<accession>Q55SP5</accession>
<accession>Q5KH33</accession>
<organism>
    <name type="scientific">Cryptococcus neoformans var. neoformans serotype D (strain B-3501A)</name>
    <name type="common">Filobasidiella neoformans</name>
    <dbReference type="NCBI Taxonomy" id="283643"/>
    <lineage>
        <taxon>Eukaryota</taxon>
        <taxon>Fungi</taxon>
        <taxon>Dikarya</taxon>
        <taxon>Basidiomycota</taxon>
        <taxon>Agaricomycotina</taxon>
        <taxon>Tremellomycetes</taxon>
        <taxon>Tremellales</taxon>
        <taxon>Cryptococcaceae</taxon>
        <taxon>Cryptococcus</taxon>
        <taxon>Cryptococcus neoformans species complex</taxon>
    </lineage>
</organism>
<feature type="chain" id="PRO_0000410036" description="rRNA-processing protein CGR1">
    <location>
        <begin position="1"/>
        <end position="127"/>
    </location>
</feature>
<feature type="region of interest" description="Disordered" evidence="3">
    <location>
        <begin position="1"/>
        <end position="127"/>
    </location>
</feature>
<feature type="coiled-coil region" evidence="2">
    <location>
        <begin position="52"/>
        <end position="114"/>
    </location>
</feature>
<feature type="compositionally biased region" description="Low complexity" evidence="3">
    <location>
        <begin position="1"/>
        <end position="22"/>
    </location>
</feature>
<feature type="compositionally biased region" description="Basic residues" evidence="3">
    <location>
        <begin position="29"/>
        <end position="39"/>
    </location>
</feature>
<feature type="compositionally biased region" description="Basic and acidic residues" evidence="3">
    <location>
        <begin position="51"/>
        <end position="105"/>
    </location>
</feature>
<feature type="compositionally biased region" description="Basic residues" evidence="3">
    <location>
        <begin position="107"/>
        <end position="127"/>
    </location>
</feature>
<sequence length="127" mass="14530">MSAEPSSSAQASAPTVVSVAPSKNGRTPGKAHKSAKTALRRSYISPSVKTPFEKRMEKEKAQQAAKQLEKELKEEKENERQRKVNIIKERRARKEEKQREEELRAKMSAKKLQRMKKREGRSKKING</sequence>
<reference key="1">
    <citation type="journal article" date="2005" name="Science">
        <title>The genome of the basidiomycetous yeast and human pathogen Cryptococcus neoformans.</title>
        <authorList>
            <person name="Loftus B.J."/>
            <person name="Fung E."/>
            <person name="Roncaglia P."/>
            <person name="Rowley D."/>
            <person name="Amedeo P."/>
            <person name="Bruno D."/>
            <person name="Vamathevan J."/>
            <person name="Miranda M."/>
            <person name="Anderson I.J."/>
            <person name="Fraser J.A."/>
            <person name="Allen J.E."/>
            <person name="Bosdet I.E."/>
            <person name="Brent M.R."/>
            <person name="Chiu R."/>
            <person name="Doering T.L."/>
            <person name="Donlin M.J."/>
            <person name="D'Souza C.A."/>
            <person name="Fox D.S."/>
            <person name="Grinberg V."/>
            <person name="Fu J."/>
            <person name="Fukushima M."/>
            <person name="Haas B.J."/>
            <person name="Huang J.C."/>
            <person name="Janbon G."/>
            <person name="Jones S.J.M."/>
            <person name="Koo H.L."/>
            <person name="Krzywinski M.I."/>
            <person name="Kwon-Chung K.J."/>
            <person name="Lengeler K.B."/>
            <person name="Maiti R."/>
            <person name="Marra M.A."/>
            <person name="Marra R.E."/>
            <person name="Mathewson C.A."/>
            <person name="Mitchell T.G."/>
            <person name="Pertea M."/>
            <person name="Riggs F.R."/>
            <person name="Salzberg S.L."/>
            <person name="Schein J.E."/>
            <person name="Shvartsbeyn A."/>
            <person name="Shin H."/>
            <person name="Shumway M."/>
            <person name="Specht C.A."/>
            <person name="Suh B.B."/>
            <person name="Tenney A."/>
            <person name="Utterback T.R."/>
            <person name="Wickes B.L."/>
            <person name="Wortman J.R."/>
            <person name="Wye N.H."/>
            <person name="Kronstad J.W."/>
            <person name="Lodge J.K."/>
            <person name="Heitman J."/>
            <person name="Davis R.W."/>
            <person name="Fraser C.M."/>
            <person name="Hyman R.W."/>
        </authorList>
    </citation>
    <scope>NUCLEOTIDE SEQUENCE [LARGE SCALE GENOMIC DNA]</scope>
    <source>
        <strain>B-3501A</strain>
    </source>
</reference>
<proteinExistence type="inferred from homology"/>
<protein>
    <recommendedName>
        <fullName>rRNA-processing protein CGR1</fullName>
    </recommendedName>
</protein>
<comment type="function">
    <text evidence="1">Involved in nucleolar integrity and required for processing of the pre-rRNA for the 60S ribosome subunit.</text>
</comment>
<comment type="subcellular location">
    <subcellularLocation>
        <location evidence="1">Nucleus</location>
        <location evidence="1">Nucleolus</location>
    </subcellularLocation>
</comment>
<comment type="similarity">
    <text evidence="4">Belongs to the CGR1 family.</text>
</comment>
<gene>
    <name type="primary">CGR1</name>
    <name type="ordered locus">CNBE1390</name>
</gene>
<keyword id="KW-0175">Coiled coil</keyword>
<keyword id="KW-0539">Nucleus</keyword>
<keyword id="KW-0690">Ribosome biogenesis</keyword>
<keyword id="KW-0698">rRNA processing</keyword>